<proteinExistence type="evidence at protein level"/>
<gene>
    <name type="primary">TECA</name>
</gene>
<sequence>MVHWEKHEGELSVVGVGAGSNDIWGVNHLGHIYHWDGHKWHKVDGELTNISVGHDGEVWGVNKNHNIYRLDRSNNKWTQIPGELVQVSVGSHHHVWGVNHLDHIYKWDHHHNKWDKIDGALTNVSVGKDGTVYGVNRGHQIYRWDGSKVDLVLGELVQIHVSDAEKIVGVNHLDHIYRLKHGKDWEKLDGELTWVSVGHHGEVWGVNKLHHIYKATL</sequence>
<name>TCT1_PHYPO</name>
<organism>
    <name type="scientific">Physarum polycephalum</name>
    <name type="common">Slime mold</name>
    <dbReference type="NCBI Taxonomy" id="5791"/>
    <lineage>
        <taxon>Eukaryota</taxon>
        <taxon>Amoebozoa</taxon>
        <taxon>Evosea</taxon>
        <taxon>Eumycetozoa</taxon>
        <taxon>Myxogastria</taxon>
        <taxon>Myxogastromycetidae</taxon>
        <taxon>Physariida</taxon>
        <taxon>Physaraceae</taxon>
        <taxon>Physarum</taxon>
    </lineage>
</organism>
<reference key="1">
    <citation type="journal article" date="1998" name="J. Biol. Chem.">
        <title>Cloning and characterization of Physarum polycephalum tectonins. Homologues of Limulus lectin L-6.</title>
        <authorList>
            <person name="Huh C.-G."/>
            <person name="Aldrich J."/>
            <person name="Mottahedeh J."/>
            <person name="Kwon H."/>
            <person name="Johnson C."/>
            <person name="Marsh R."/>
        </authorList>
    </citation>
    <scope>NUCLEOTIDE SEQUENCE [MRNA]</scope>
    <scope>PROTEIN SEQUENCE OF 2-21</scope>
    <scope>CHARACTERIZATION</scope>
    <source>
        <strain>M3</strain>
    </source>
</reference>
<keyword id="KW-0968">Cytoplasmic vesicle</keyword>
<keyword id="KW-0903">Direct protein sequencing</keyword>
<keyword id="KW-0430">Lectin</keyword>
<keyword id="KW-0472">Membrane</keyword>
<keyword id="KW-0677">Repeat</keyword>
<evidence type="ECO:0000269" key="1">
    <source>
    </source>
</evidence>
<evidence type="ECO:0000305" key="2"/>
<comment type="function">
    <text>Probably involved in bacterial recognition. May be a lectin that function as part of a transmembrane signaling complex during phagocytosis.</text>
</comment>
<comment type="subcellular location">
    <subcellularLocation>
        <location>Cell surface</location>
    </subcellularLocation>
    <subcellularLocation>
        <location>Cytoplasmic vesicle membrane</location>
    </subcellularLocation>
    <text>Also bound to inner membrane of certain cytoplasmic vesicles.</text>
</comment>
<comment type="similarity">
    <text evidence="2">Belongs to the tectonin family.</text>
</comment>
<protein>
    <recommendedName>
        <fullName>Tectonin-1</fullName>
    </recommendedName>
    <alternativeName>
        <fullName>Tectonin I</fullName>
    </alternativeName>
</protein>
<accession>O61063</accession>
<feature type="initiator methionine" description="Removed" evidence="1">
    <location>
        <position position="1"/>
    </location>
</feature>
<feature type="chain" id="PRO_0000221476" description="Tectonin-1">
    <location>
        <begin position="2"/>
        <end position="217"/>
    </location>
</feature>
<feature type="repeat" description="1">
    <location>
        <begin position="2"/>
        <end position="37"/>
    </location>
</feature>
<feature type="repeat" description="2">
    <location>
        <begin position="38"/>
        <end position="74"/>
    </location>
</feature>
<feature type="repeat" description="3">
    <location>
        <begin position="75"/>
        <end position="111"/>
    </location>
</feature>
<feature type="repeat" description="4">
    <location>
        <begin position="112"/>
        <end position="146"/>
    </location>
</feature>
<feature type="repeat" description="5">
    <location>
        <begin position="147"/>
        <end position="182"/>
    </location>
</feature>
<feature type="repeat" description="6">
    <location>
        <begin position="183"/>
        <end position="217"/>
    </location>
</feature>
<feature type="region of interest" description="6 X approximate tandem repeats">
    <location>
        <begin position="2"/>
        <end position="217"/>
    </location>
</feature>
<feature type="sequence conflict" description="In Ref. 1; AA sequence." evidence="2" ref="1">
    <original>H</original>
    <variation>T</variation>
    <location>
        <position position="3"/>
    </location>
</feature>
<feature type="sequence conflict" description="In Ref. 1; AA sequence." evidence="2" ref="1">
    <original>H</original>
    <variation>W</variation>
    <location>
        <position position="7"/>
    </location>
</feature>
<feature type="sequence conflict" description="In Ref. 1; AA sequence." evidence="2" ref="1">
    <original>S</original>
    <variation>L</variation>
    <location>
        <position position="20"/>
    </location>
</feature>
<dbReference type="EMBL" id="AF041455">
    <property type="protein sequence ID" value="AAC06200.1"/>
    <property type="molecule type" value="mRNA"/>
</dbReference>
<dbReference type="SMR" id="O61063"/>
<dbReference type="GO" id="GO:0009986">
    <property type="term" value="C:cell surface"/>
    <property type="evidence" value="ECO:0007669"/>
    <property type="project" value="UniProtKB-SubCell"/>
</dbReference>
<dbReference type="GO" id="GO:0030659">
    <property type="term" value="C:cytoplasmic vesicle membrane"/>
    <property type="evidence" value="ECO:0007669"/>
    <property type="project" value="UniProtKB-SubCell"/>
</dbReference>
<dbReference type="GO" id="GO:0030246">
    <property type="term" value="F:carbohydrate binding"/>
    <property type="evidence" value="ECO:0007669"/>
    <property type="project" value="UniProtKB-KW"/>
</dbReference>
<dbReference type="InterPro" id="IPR006624">
    <property type="entry name" value="Beta-propeller_rpt_TECPR"/>
</dbReference>
<dbReference type="InterPro" id="IPR051513">
    <property type="entry name" value="Tectonin_beta-propeller"/>
</dbReference>
<dbReference type="PANTHER" id="PTHR23250">
    <property type="entry name" value="DYSFERLIN-RELATED"/>
    <property type="match status" value="1"/>
</dbReference>
<dbReference type="PANTHER" id="PTHR23250:SF3">
    <property type="entry name" value="FISH-EGG LECTIN-LIKE ISOFORM X1-RELATED"/>
    <property type="match status" value="1"/>
</dbReference>
<dbReference type="Pfam" id="PF19193">
    <property type="entry name" value="Tectonin"/>
    <property type="match status" value="2"/>
</dbReference>
<dbReference type="SMART" id="SM00706">
    <property type="entry name" value="TECPR"/>
    <property type="match status" value="6"/>
</dbReference>
<dbReference type="SUPFAM" id="SSF63829">
    <property type="entry name" value="Calcium-dependent phosphotriesterase"/>
    <property type="match status" value="1"/>
</dbReference>